<name>DCDA_CAMJE</name>
<proteinExistence type="inferred from homology"/>
<organism>
    <name type="scientific">Campylobacter jejuni subsp. jejuni serotype O:2 (strain ATCC 700819 / NCTC 11168)</name>
    <dbReference type="NCBI Taxonomy" id="192222"/>
    <lineage>
        <taxon>Bacteria</taxon>
        <taxon>Pseudomonadati</taxon>
        <taxon>Campylobacterota</taxon>
        <taxon>Epsilonproteobacteria</taxon>
        <taxon>Campylobacterales</taxon>
        <taxon>Campylobacteraceae</taxon>
        <taxon>Campylobacter</taxon>
    </lineage>
</organism>
<sequence length="402" mass="45375">MDYKQLKQEFNTPFYIYNFDFIKERFLNLKEAFKARKSQIFYAVKANSNLSLLQMLANLDSGFDCVSIGEVKRALKAGAKAYKIIFSGVGKTKEELRQALEYDILYINLESEAEMMLLESVAKELNLKARISIRVNPNVDAKTHPYISTGLNENKFGVEIDIARKMYLYAKNSSFLEPVGVHFHIGSQLLDISPIHEAAAIVAKLVRELKALQIDLKFFDIGGGLGVAYEKNECEPDLYDYAQGILAQLHGLDLTIGMEPGRYLVAKSGEFVCSVLYEKQNKTKRFVVVDGAMNDLIRPSLYEAYHEIILPYNQGEESLCDVVGGICESGDFFAKARSLPSTQSDDIMVIKNTGAYGFSMSSNYNTRNKVCELALEEGQVRLIRQRENFEDQIALEEKFLKA</sequence>
<feature type="chain" id="PRO_0000149919" description="Diaminopimelate decarboxylase">
    <location>
        <begin position="1"/>
        <end position="402"/>
    </location>
</feature>
<feature type="active site" description="Proton donor" evidence="1">
    <location>
        <position position="327"/>
    </location>
</feature>
<feature type="binding site" evidence="2">
    <location>
        <position position="224"/>
    </location>
    <ligand>
        <name>pyridoxal 5'-phosphate</name>
        <dbReference type="ChEBI" id="CHEBI:597326"/>
    </ligand>
</feature>
<feature type="binding site" evidence="2">
    <location>
        <begin position="259"/>
        <end position="262"/>
    </location>
    <ligand>
        <name>pyridoxal 5'-phosphate</name>
        <dbReference type="ChEBI" id="CHEBI:597326"/>
    </ligand>
</feature>
<feature type="binding site" evidence="2">
    <location>
        <position position="262"/>
    </location>
    <ligand>
        <name>substrate</name>
    </ligand>
</feature>
<feature type="binding site" evidence="2">
    <location>
        <position position="298"/>
    </location>
    <ligand>
        <name>substrate</name>
    </ligand>
</feature>
<feature type="binding site" evidence="2">
    <location>
        <position position="302"/>
    </location>
    <ligand>
        <name>substrate</name>
    </ligand>
</feature>
<feature type="binding site" evidence="2">
    <location>
        <position position="328"/>
    </location>
    <ligand>
        <name>substrate</name>
    </ligand>
</feature>
<feature type="binding site" evidence="2">
    <location>
        <position position="356"/>
    </location>
    <ligand>
        <name>pyridoxal 5'-phosphate</name>
        <dbReference type="ChEBI" id="CHEBI:597326"/>
    </ligand>
</feature>
<feature type="binding site" evidence="2">
    <location>
        <position position="356"/>
    </location>
    <ligand>
        <name>substrate</name>
    </ligand>
</feature>
<feature type="modified residue" description="N6-(pyridoxal phosphate)lysine" evidence="2">
    <location>
        <position position="45"/>
    </location>
</feature>
<keyword id="KW-0028">Amino-acid biosynthesis</keyword>
<keyword id="KW-0210">Decarboxylase</keyword>
<keyword id="KW-0456">Lyase</keyword>
<keyword id="KW-0457">Lysine biosynthesis</keyword>
<keyword id="KW-0663">Pyridoxal phosphate</keyword>
<keyword id="KW-1185">Reference proteome</keyword>
<gene>
    <name evidence="2" type="primary">lysA</name>
    <name type="ordered locus">Cj0314</name>
</gene>
<protein>
    <recommendedName>
        <fullName evidence="2">Diaminopimelate decarboxylase</fullName>
        <shortName evidence="2">DAP decarboxylase</shortName>
        <shortName evidence="2">DAPDC</shortName>
        <ecNumber evidence="2">4.1.1.20</ecNumber>
    </recommendedName>
</protein>
<comment type="function">
    <text evidence="2">Specifically catalyzes the decarboxylation of meso-diaminopimelate (meso-DAP) to L-lysine.</text>
</comment>
<comment type="catalytic activity">
    <reaction evidence="2">
        <text>meso-2,6-diaminopimelate + H(+) = L-lysine + CO2</text>
        <dbReference type="Rhea" id="RHEA:15101"/>
        <dbReference type="ChEBI" id="CHEBI:15378"/>
        <dbReference type="ChEBI" id="CHEBI:16526"/>
        <dbReference type="ChEBI" id="CHEBI:32551"/>
        <dbReference type="ChEBI" id="CHEBI:57791"/>
        <dbReference type="EC" id="4.1.1.20"/>
    </reaction>
</comment>
<comment type="cofactor">
    <cofactor evidence="2">
        <name>pyridoxal 5'-phosphate</name>
        <dbReference type="ChEBI" id="CHEBI:597326"/>
    </cofactor>
</comment>
<comment type="pathway">
    <text evidence="2">Amino-acid biosynthesis; L-lysine biosynthesis via DAP pathway; L-lysine from DL-2,6-diaminopimelate: step 1/1.</text>
</comment>
<comment type="subunit">
    <text evidence="2">Homodimer.</text>
</comment>
<comment type="similarity">
    <text evidence="2">Belongs to the Orn/Lys/Arg decarboxylase class-II family. LysA subfamily.</text>
</comment>
<accession>Q9PII5</accession>
<accession>Q0PBJ5</accession>
<dbReference type="EC" id="4.1.1.20" evidence="2"/>
<dbReference type="EMBL" id="AL111168">
    <property type="protein sequence ID" value="CAL34465.1"/>
    <property type="molecule type" value="Genomic_DNA"/>
</dbReference>
<dbReference type="PIR" id="F81450">
    <property type="entry name" value="F81450"/>
</dbReference>
<dbReference type="RefSeq" id="WP_002858733.1">
    <property type="nucleotide sequence ID" value="NZ_SZUC01000004.1"/>
</dbReference>
<dbReference type="RefSeq" id="YP_002343752.1">
    <property type="nucleotide sequence ID" value="NC_002163.1"/>
</dbReference>
<dbReference type="SMR" id="Q9PII5"/>
<dbReference type="IntAct" id="Q9PII5">
    <property type="interactions" value="30"/>
</dbReference>
<dbReference type="STRING" id="192222.Cj0314"/>
<dbReference type="PaxDb" id="192222-Cj0314"/>
<dbReference type="EnsemblBacteria" id="CAL34465">
    <property type="protein sequence ID" value="CAL34465"/>
    <property type="gene ID" value="Cj0314"/>
</dbReference>
<dbReference type="GeneID" id="904638"/>
<dbReference type="KEGG" id="cje:Cj0314"/>
<dbReference type="PATRIC" id="fig|192222.6.peg.306"/>
<dbReference type="eggNOG" id="COG0019">
    <property type="taxonomic scope" value="Bacteria"/>
</dbReference>
<dbReference type="HOGENOM" id="CLU_026444_0_0_7"/>
<dbReference type="OrthoDB" id="9802241at2"/>
<dbReference type="UniPathway" id="UPA00034">
    <property type="reaction ID" value="UER00027"/>
</dbReference>
<dbReference type="Proteomes" id="UP000000799">
    <property type="component" value="Chromosome"/>
</dbReference>
<dbReference type="GO" id="GO:0008836">
    <property type="term" value="F:diaminopimelate decarboxylase activity"/>
    <property type="evidence" value="ECO:0007669"/>
    <property type="project" value="UniProtKB-UniRule"/>
</dbReference>
<dbReference type="GO" id="GO:0030170">
    <property type="term" value="F:pyridoxal phosphate binding"/>
    <property type="evidence" value="ECO:0007669"/>
    <property type="project" value="UniProtKB-UniRule"/>
</dbReference>
<dbReference type="GO" id="GO:0009089">
    <property type="term" value="P:lysine biosynthetic process via diaminopimelate"/>
    <property type="evidence" value="ECO:0007669"/>
    <property type="project" value="UniProtKB-UniRule"/>
</dbReference>
<dbReference type="CDD" id="cd06828">
    <property type="entry name" value="PLPDE_III_DapDC"/>
    <property type="match status" value="1"/>
</dbReference>
<dbReference type="FunFam" id="3.20.20.10:FF:000003">
    <property type="entry name" value="Diaminopimelate decarboxylase"/>
    <property type="match status" value="1"/>
</dbReference>
<dbReference type="Gene3D" id="3.20.20.10">
    <property type="entry name" value="Alanine racemase"/>
    <property type="match status" value="1"/>
</dbReference>
<dbReference type="Gene3D" id="2.40.37.10">
    <property type="entry name" value="Lyase, Ornithine Decarboxylase, Chain A, domain 1"/>
    <property type="match status" value="1"/>
</dbReference>
<dbReference type="HAMAP" id="MF_02120">
    <property type="entry name" value="LysA"/>
    <property type="match status" value="1"/>
</dbReference>
<dbReference type="InterPro" id="IPR009006">
    <property type="entry name" value="Ala_racemase/Decarboxylase_C"/>
</dbReference>
<dbReference type="InterPro" id="IPR002986">
    <property type="entry name" value="DAP_deCOOHase_LysA"/>
</dbReference>
<dbReference type="InterPro" id="IPR022643">
    <property type="entry name" value="De-COase2_C"/>
</dbReference>
<dbReference type="InterPro" id="IPR022657">
    <property type="entry name" value="De-COase2_CS"/>
</dbReference>
<dbReference type="InterPro" id="IPR022644">
    <property type="entry name" value="De-COase2_N"/>
</dbReference>
<dbReference type="InterPro" id="IPR000183">
    <property type="entry name" value="Orn/DAP/Arg_de-COase"/>
</dbReference>
<dbReference type="InterPro" id="IPR029066">
    <property type="entry name" value="PLP-binding_barrel"/>
</dbReference>
<dbReference type="NCBIfam" id="TIGR01048">
    <property type="entry name" value="lysA"/>
    <property type="match status" value="1"/>
</dbReference>
<dbReference type="PANTHER" id="PTHR43727">
    <property type="entry name" value="DIAMINOPIMELATE DECARBOXYLASE"/>
    <property type="match status" value="1"/>
</dbReference>
<dbReference type="PANTHER" id="PTHR43727:SF2">
    <property type="entry name" value="GROUP IV DECARBOXYLASE"/>
    <property type="match status" value="1"/>
</dbReference>
<dbReference type="Pfam" id="PF02784">
    <property type="entry name" value="Orn_Arg_deC_N"/>
    <property type="match status" value="1"/>
</dbReference>
<dbReference type="Pfam" id="PF00278">
    <property type="entry name" value="Orn_DAP_Arg_deC"/>
    <property type="match status" value="1"/>
</dbReference>
<dbReference type="PRINTS" id="PR01181">
    <property type="entry name" value="DAPDCRBXLASE"/>
</dbReference>
<dbReference type="PRINTS" id="PR01179">
    <property type="entry name" value="ODADCRBXLASE"/>
</dbReference>
<dbReference type="SUPFAM" id="SSF50621">
    <property type="entry name" value="Alanine racemase C-terminal domain-like"/>
    <property type="match status" value="1"/>
</dbReference>
<dbReference type="SUPFAM" id="SSF51419">
    <property type="entry name" value="PLP-binding barrel"/>
    <property type="match status" value="1"/>
</dbReference>
<dbReference type="PROSITE" id="PS00879">
    <property type="entry name" value="ODR_DC_2_2"/>
    <property type="match status" value="1"/>
</dbReference>
<reference key="1">
    <citation type="journal article" date="2000" name="Nature">
        <title>The genome sequence of the food-borne pathogen Campylobacter jejuni reveals hypervariable sequences.</title>
        <authorList>
            <person name="Parkhill J."/>
            <person name="Wren B.W."/>
            <person name="Mungall K.L."/>
            <person name="Ketley J.M."/>
            <person name="Churcher C.M."/>
            <person name="Basham D."/>
            <person name="Chillingworth T."/>
            <person name="Davies R.M."/>
            <person name="Feltwell T."/>
            <person name="Holroyd S."/>
            <person name="Jagels K."/>
            <person name="Karlyshev A.V."/>
            <person name="Moule S."/>
            <person name="Pallen M.J."/>
            <person name="Penn C.W."/>
            <person name="Quail M.A."/>
            <person name="Rajandream M.A."/>
            <person name="Rutherford K.M."/>
            <person name="van Vliet A.H.M."/>
            <person name="Whitehead S."/>
            <person name="Barrell B.G."/>
        </authorList>
    </citation>
    <scope>NUCLEOTIDE SEQUENCE [LARGE SCALE GENOMIC DNA]</scope>
    <source>
        <strain>ATCC 700819 / NCTC 11168</strain>
    </source>
</reference>
<evidence type="ECO:0000255" key="1"/>
<evidence type="ECO:0000255" key="2">
    <source>
        <dbReference type="HAMAP-Rule" id="MF_02120"/>
    </source>
</evidence>